<protein>
    <recommendedName>
        <fullName evidence="1">Guanidinium exporter</fullName>
    </recommendedName>
</protein>
<accession>Q6PT86</accession>
<proteinExistence type="inferred from homology"/>
<feature type="chain" id="PRO_0000108103" description="Guanidinium exporter">
    <location>
        <begin position="1"/>
        <end position="105"/>
    </location>
</feature>
<feature type="transmembrane region" description="Helical" evidence="2">
    <location>
        <begin position="1"/>
        <end position="21"/>
    </location>
</feature>
<feature type="topological domain" description="Cytoplasmic" evidence="2">
    <location>
        <begin position="22"/>
        <end position="28"/>
    </location>
</feature>
<feature type="transmembrane region" description="Helical" evidence="2">
    <location>
        <begin position="29"/>
        <end position="49"/>
    </location>
</feature>
<feature type="topological domain" description="Periplasmic" evidence="2">
    <location>
        <begin position="50"/>
        <end position="57"/>
    </location>
</feature>
<feature type="transmembrane region" description="Helical" evidence="2">
    <location>
        <begin position="58"/>
        <end position="78"/>
    </location>
</feature>
<feature type="topological domain" description="Cytoplasmic" evidence="2">
    <location>
        <begin position="79"/>
        <end position="81"/>
    </location>
</feature>
<feature type="transmembrane region" description="Helical" evidence="2">
    <location>
        <begin position="82"/>
        <end position="102"/>
    </location>
</feature>
<feature type="topological domain" description="Periplasmic" evidence="2">
    <location>
        <begin position="103"/>
        <end position="105"/>
    </location>
</feature>
<geneLocation type="plasmid">
    <name>pNF1358</name>
</geneLocation>
<comment type="function">
    <text evidence="1">Guanidinium ion exporter. Couples guanidinium export to the proton motive force, exchanging one guanidinium ion for two protons.</text>
</comment>
<comment type="subcellular location">
    <subcellularLocation>
        <location evidence="1">Cell inner membrane</location>
        <topology evidence="1">Multi-pass membrane protein</topology>
    </subcellularLocation>
</comment>
<comment type="similarity">
    <text evidence="3">Belongs to the drug/metabolite transporter (DMT) superfamily. Small multidrug resistance (SMR) (TC 2.A.7.1) family. Gdx/SugE subfamily.</text>
</comment>
<organism>
    <name type="scientific">Salmonella thompson</name>
    <dbReference type="NCBI Taxonomy" id="600"/>
    <lineage>
        <taxon>Bacteria</taxon>
        <taxon>Pseudomonadati</taxon>
        <taxon>Pseudomonadota</taxon>
        <taxon>Gammaproteobacteria</taxon>
        <taxon>Enterobacterales</taxon>
        <taxon>Enterobacteriaceae</taxon>
        <taxon>Salmonella</taxon>
    </lineage>
</organism>
<name>GDX_SALTH</name>
<reference key="1">
    <citation type="journal article" date="2004" name="Antimicrob. Agents Chemother.">
        <title>DNA sequence analysis of regions surrounding blaCMY-2 from multiple Salmonella plasmid backbones.</title>
        <authorList>
            <person name="Giles W.P."/>
            <person name="Benson A.K."/>
            <person name="Olson M.E."/>
            <person name="Hutkins R.W."/>
            <person name="Whichard J.M."/>
            <person name="Winokur P.L."/>
            <person name="Fey P.D."/>
        </authorList>
    </citation>
    <scope>NUCLEOTIDE SEQUENCE [GENOMIC DNA]</scope>
</reference>
<evidence type="ECO:0000250" key="1">
    <source>
        <dbReference type="UniProtKB" id="P69937"/>
    </source>
</evidence>
<evidence type="ECO:0000255" key="2"/>
<evidence type="ECO:0000305" key="3"/>
<dbReference type="EMBL" id="AY581206">
    <property type="protein sequence ID" value="AAT01058.1"/>
    <property type="molecule type" value="Genomic_DNA"/>
</dbReference>
<dbReference type="RefSeq" id="WP_000118520.1">
    <property type="nucleotide sequence ID" value="NZ_MT560003.1"/>
</dbReference>
<dbReference type="RefSeq" id="YP_006954596.1">
    <property type="nucleotide sequence ID" value="NC_019099.1"/>
</dbReference>
<dbReference type="SMR" id="Q6PT86"/>
<dbReference type="GeneID" id="93521401"/>
<dbReference type="PATRIC" id="fig|600.3.peg.4068"/>
<dbReference type="GO" id="GO:0005886">
    <property type="term" value="C:plasma membrane"/>
    <property type="evidence" value="ECO:0007669"/>
    <property type="project" value="UniProtKB-SubCell"/>
</dbReference>
<dbReference type="GO" id="GO:0022857">
    <property type="term" value="F:transmembrane transporter activity"/>
    <property type="evidence" value="ECO:0007669"/>
    <property type="project" value="InterPro"/>
</dbReference>
<dbReference type="GO" id="GO:0006811">
    <property type="term" value="P:monoatomic ion transport"/>
    <property type="evidence" value="ECO:0007669"/>
    <property type="project" value="UniProtKB-KW"/>
</dbReference>
<dbReference type="FunFam" id="1.10.3730.20:FF:000001">
    <property type="entry name" value="Quaternary ammonium compound resistance transporter SugE"/>
    <property type="match status" value="1"/>
</dbReference>
<dbReference type="Gene3D" id="1.10.3730.20">
    <property type="match status" value="1"/>
</dbReference>
<dbReference type="InterPro" id="IPR000390">
    <property type="entry name" value="Small_drug/metabolite_transptr"/>
</dbReference>
<dbReference type="InterPro" id="IPR045324">
    <property type="entry name" value="Small_multidrug_res"/>
</dbReference>
<dbReference type="NCBIfam" id="NF008512">
    <property type="entry name" value="PRK11431.1"/>
    <property type="match status" value="1"/>
</dbReference>
<dbReference type="PANTHER" id="PTHR30561:SF0">
    <property type="entry name" value="GUANIDINIUM EXPORTER"/>
    <property type="match status" value="1"/>
</dbReference>
<dbReference type="PANTHER" id="PTHR30561">
    <property type="entry name" value="SMR FAMILY PROTON-DEPENDENT DRUG EFFLUX TRANSPORTER SUGE"/>
    <property type="match status" value="1"/>
</dbReference>
<dbReference type="Pfam" id="PF00893">
    <property type="entry name" value="Multi_Drug_Res"/>
    <property type="match status" value="1"/>
</dbReference>
<dbReference type="SUPFAM" id="SSF103481">
    <property type="entry name" value="Multidrug resistance efflux transporter EmrE"/>
    <property type="match status" value="1"/>
</dbReference>
<sequence>MSWIVLLIAGLLEVVWAIGLKYTHGFTRLTPSIITIAAMIVSIAMLSWAMRTLPVGTAYAVWTGIGAVGAAITGILLLGESASPARLLSLGLIVAGIIGLKLSTH</sequence>
<keyword id="KW-0997">Cell inner membrane</keyword>
<keyword id="KW-1003">Cell membrane</keyword>
<keyword id="KW-0406">Ion transport</keyword>
<keyword id="KW-0472">Membrane</keyword>
<keyword id="KW-0614">Plasmid</keyword>
<keyword id="KW-0812">Transmembrane</keyword>
<keyword id="KW-1133">Transmembrane helix</keyword>
<keyword id="KW-0813">Transport</keyword>
<gene>
    <name evidence="1" type="primary">gdx</name>
    <name type="synonym">sugE</name>
</gene>